<sequence>MSTVTITDLARENVRNLTPYQSARRLGGNGDVWLNANEYPTAVEFQLTQQTLNRYPECQPKAVIENYAQYAGVKPEQVLVSRGADEGIELLIRAFCEPGKDAILYCPPTYGMYSVSAETIGVECRTVPTLENWQLDLQGISDKLDGVKVVYVCSPNNPTGQLINPQDFRTLLELTRGKAIVVADEAYIEFCPQASLAGWLAEYPHLAILRTLSKAFALAGLRCGFTLANEEVINLLMKVIAPYPLSTPVADIAAQALSPQGIIAMRERVAQIIAEREYLIAALKEIPCVEQVFDSETNYILARFKASSAVFKSLWDQGIILRDQNKQPSLSGCLRITVGTREESQRVIDALRAEQV</sequence>
<accession>Q9S5G6</accession>
<proteinExistence type="inferred from homology"/>
<feature type="chain" id="PRO_0000153361" description="Histidinol-phosphate aminotransferase">
    <location>
        <begin position="1"/>
        <end position="356"/>
    </location>
</feature>
<feature type="modified residue" description="N6-(pyridoxal phosphate)lysine" evidence="1">
    <location>
        <position position="214"/>
    </location>
</feature>
<name>HIS8_ECO57</name>
<protein>
    <recommendedName>
        <fullName>Histidinol-phosphate aminotransferase</fullName>
        <ecNumber>2.6.1.9</ecNumber>
    </recommendedName>
    <alternativeName>
        <fullName>Imidazole acetol-phosphate transaminase</fullName>
    </alternativeName>
</protein>
<evidence type="ECO:0000250" key="1"/>
<evidence type="ECO:0000305" key="2"/>
<reference key="1">
    <citation type="journal article" date="1999" name="Microb. Pathog.">
        <title>Analysis of the genes responsible for the O-antigen synthesis in enterohaemorrhagic Escherichia coli O157.</title>
        <authorList>
            <person name="Shimizu T."/>
            <person name="Yamasaki S."/>
            <person name="Tsukamoto T."/>
            <person name="Takeda Y."/>
        </authorList>
    </citation>
    <scope>NUCLEOTIDE SEQUENCE [GENOMIC DNA]</scope>
    <source>
        <strain>O157:H- / 184 / EHEC</strain>
    </source>
</reference>
<reference key="2">
    <citation type="journal article" date="2001" name="Nature">
        <title>Genome sequence of enterohaemorrhagic Escherichia coli O157:H7.</title>
        <authorList>
            <person name="Perna N.T."/>
            <person name="Plunkett G. III"/>
            <person name="Burland V."/>
            <person name="Mau B."/>
            <person name="Glasner J.D."/>
            <person name="Rose D.J."/>
            <person name="Mayhew G.F."/>
            <person name="Evans P.S."/>
            <person name="Gregor J."/>
            <person name="Kirkpatrick H.A."/>
            <person name="Posfai G."/>
            <person name="Hackett J."/>
            <person name="Klink S."/>
            <person name="Boutin A."/>
            <person name="Shao Y."/>
            <person name="Miller L."/>
            <person name="Grotbeck E.J."/>
            <person name="Davis N.W."/>
            <person name="Lim A."/>
            <person name="Dimalanta E.T."/>
            <person name="Potamousis K."/>
            <person name="Apodaca J."/>
            <person name="Anantharaman T.S."/>
            <person name="Lin J."/>
            <person name="Yen G."/>
            <person name="Schwartz D.C."/>
            <person name="Welch R.A."/>
            <person name="Blattner F.R."/>
        </authorList>
    </citation>
    <scope>NUCLEOTIDE SEQUENCE [LARGE SCALE GENOMIC DNA]</scope>
    <source>
        <strain>O157:H7 / EDL933 / ATCC 700927 / EHEC</strain>
    </source>
</reference>
<reference key="3">
    <citation type="journal article" date="2001" name="DNA Res.">
        <title>Complete genome sequence of enterohemorrhagic Escherichia coli O157:H7 and genomic comparison with a laboratory strain K-12.</title>
        <authorList>
            <person name="Hayashi T."/>
            <person name="Makino K."/>
            <person name="Ohnishi M."/>
            <person name="Kurokawa K."/>
            <person name="Ishii K."/>
            <person name="Yokoyama K."/>
            <person name="Han C.-G."/>
            <person name="Ohtsubo E."/>
            <person name="Nakayama K."/>
            <person name="Murata T."/>
            <person name="Tanaka M."/>
            <person name="Tobe T."/>
            <person name="Iida T."/>
            <person name="Takami H."/>
            <person name="Honda T."/>
            <person name="Sasakawa C."/>
            <person name="Ogasawara N."/>
            <person name="Yasunaga T."/>
            <person name="Kuhara S."/>
            <person name="Shiba T."/>
            <person name="Hattori M."/>
            <person name="Shinagawa H."/>
        </authorList>
    </citation>
    <scope>NUCLEOTIDE SEQUENCE [LARGE SCALE GENOMIC DNA]</scope>
    <source>
        <strain>O157:H7 / Sakai / RIMD 0509952 / EHEC</strain>
    </source>
</reference>
<dbReference type="EC" id="2.6.1.9"/>
<dbReference type="EMBL" id="AB008676">
    <property type="protein sequence ID" value="BAA77744.1"/>
    <property type="molecule type" value="Genomic_DNA"/>
</dbReference>
<dbReference type="EMBL" id="AE005174">
    <property type="protein sequence ID" value="AAG57080.1"/>
    <property type="molecule type" value="Genomic_DNA"/>
</dbReference>
<dbReference type="EMBL" id="BA000007">
    <property type="protein sequence ID" value="BAB36245.1"/>
    <property type="molecule type" value="Genomic_DNA"/>
</dbReference>
<dbReference type="PIR" id="D85827">
    <property type="entry name" value="D85827"/>
</dbReference>
<dbReference type="PIR" id="F90981">
    <property type="entry name" value="F90981"/>
</dbReference>
<dbReference type="RefSeq" id="NP_310849.1">
    <property type="nucleotide sequence ID" value="NC_002695.1"/>
</dbReference>
<dbReference type="RefSeq" id="WP_000108963.1">
    <property type="nucleotide sequence ID" value="NZ_VOAI01000013.1"/>
</dbReference>
<dbReference type="SMR" id="Q9S5G6"/>
<dbReference type="STRING" id="155864.Z3183"/>
<dbReference type="GeneID" id="914123"/>
<dbReference type="KEGG" id="ece:Z3183"/>
<dbReference type="KEGG" id="ecs:ECs_2822"/>
<dbReference type="PATRIC" id="fig|386585.9.peg.2957"/>
<dbReference type="eggNOG" id="COG0079">
    <property type="taxonomic scope" value="Bacteria"/>
</dbReference>
<dbReference type="HOGENOM" id="CLU_017584_3_1_6"/>
<dbReference type="OMA" id="NFVQFGR"/>
<dbReference type="UniPathway" id="UPA00031">
    <property type="reaction ID" value="UER00012"/>
</dbReference>
<dbReference type="Proteomes" id="UP000000558">
    <property type="component" value="Chromosome"/>
</dbReference>
<dbReference type="Proteomes" id="UP000002519">
    <property type="component" value="Chromosome"/>
</dbReference>
<dbReference type="GO" id="GO:0004400">
    <property type="term" value="F:histidinol-phosphate transaminase activity"/>
    <property type="evidence" value="ECO:0007669"/>
    <property type="project" value="UniProtKB-UniRule"/>
</dbReference>
<dbReference type="GO" id="GO:0030170">
    <property type="term" value="F:pyridoxal phosphate binding"/>
    <property type="evidence" value="ECO:0007669"/>
    <property type="project" value="InterPro"/>
</dbReference>
<dbReference type="GO" id="GO:0000105">
    <property type="term" value="P:L-histidine biosynthetic process"/>
    <property type="evidence" value="ECO:0007669"/>
    <property type="project" value="UniProtKB-UniRule"/>
</dbReference>
<dbReference type="CDD" id="cd00609">
    <property type="entry name" value="AAT_like"/>
    <property type="match status" value="1"/>
</dbReference>
<dbReference type="FunFam" id="3.40.640.10:FF:000032">
    <property type="entry name" value="Histidinol-phosphate aminotransferase"/>
    <property type="match status" value="1"/>
</dbReference>
<dbReference type="FunFam" id="3.90.1150.10:FF:000042">
    <property type="entry name" value="Histidinol-phosphate aminotransferase"/>
    <property type="match status" value="1"/>
</dbReference>
<dbReference type="Gene3D" id="3.90.1150.10">
    <property type="entry name" value="Aspartate Aminotransferase, domain 1"/>
    <property type="match status" value="1"/>
</dbReference>
<dbReference type="Gene3D" id="3.40.640.10">
    <property type="entry name" value="Type I PLP-dependent aspartate aminotransferase-like (Major domain)"/>
    <property type="match status" value="1"/>
</dbReference>
<dbReference type="HAMAP" id="MF_01023">
    <property type="entry name" value="HisC_aminotrans_2"/>
    <property type="match status" value="1"/>
</dbReference>
<dbReference type="InterPro" id="IPR001917">
    <property type="entry name" value="Aminotrans_II_pyridoxalP_BS"/>
</dbReference>
<dbReference type="InterPro" id="IPR004839">
    <property type="entry name" value="Aminotransferase_I/II_large"/>
</dbReference>
<dbReference type="InterPro" id="IPR005861">
    <property type="entry name" value="HisP_aminotrans"/>
</dbReference>
<dbReference type="InterPro" id="IPR015424">
    <property type="entry name" value="PyrdxlP-dep_Trfase"/>
</dbReference>
<dbReference type="InterPro" id="IPR015421">
    <property type="entry name" value="PyrdxlP-dep_Trfase_major"/>
</dbReference>
<dbReference type="InterPro" id="IPR015422">
    <property type="entry name" value="PyrdxlP-dep_Trfase_small"/>
</dbReference>
<dbReference type="NCBIfam" id="TIGR01141">
    <property type="entry name" value="hisC"/>
    <property type="match status" value="1"/>
</dbReference>
<dbReference type="PANTHER" id="PTHR42885:SF2">
    <property type="entry name" value="HISTIDINOL-PHOSPHATE AMINOTRANSFERASE"/>
    <property type="match status" value="1"/>
</dbReference>
<dbReference type="PANTHER" id="PTHR42885">
    <property type="entry name" value="HISTIDINOL-PHOSPHATE AMINOTRANSFERASE-RELATED"/>
    <property type="match status" value="1"/>
</dbReference>
<dbReference type="Pfam" id="PF00155">
    <property type="entry name" value="Aminotran_1_2"/>
    <property type="match status" value="1"/>
</dbReference>
<dbReference type="SUPFAM" id="SSF53383">
    <property type="entry name" value="PLP-dependent transferases"/>
    <property type="match status" value="1"/>
</dbReference>
<dbReference type="PROSITE" id="PS00599">
    <property type="entry name" value="AA_TRANSFER_CLASS_2"/>
    <property type="match status" value="1"/>
</dbReference>
<keyword id="KW-0028">Amino-acid biosynthesis</keyword>
<keyword id="KW-0032">Aminotransferase</keyword>
<keyword id="KW-0368">Histidine biosynthesis</keyword>
<keyword id="KW-0663">Pyridoxal phosphate</keyword>
<keyword id="KW-1185">Reference proteome</keyword>
<keyword id="KW-0808">Transferase</keyword>
<comment type="catalytic activity">
    <reaction>
        <text>L-histidinol phosphate + 2-oxoglutarate = 3-(imidazol-4-yl)-2-oxopropyl phosphate + L-glutamate</text>
        <dbReference type="Rhea" id="RHEA:23744"/>
        <dbReference type="ChEBI" id="CHEBI:16810"/>
        <dbReference type="ChEBI" id="CHEBI:29985"/>
        <dbReference type="ChEBI" id="CHEBI:57766"/>
        <dbReference type="ChEBI" id="CHEBI:57980"/>
        <dbReference type="EC" id="2.6.1.9"/>
    </reaction>
</comment>
<comment type="cofactor">
    <cofactor evidence="1">
        <name>pyridoxal 5'-phosphate</name>
        <dbReference type="ChEBI" id="CHEBI:597326"/>
    </cofactor>
</comment>
<comment type="pathway">
    <text>Amino-acid biosynthesis; L-histidine biosynthesis; L-histidine from 5-phospho-alpha-D-ribose 1-diphosphate: step 7/9.</text>
</comment>
<comment type="subunit">
    <text evidence="1">Homodimer.</text>
</comment>
<comment type="similarity">
    <text evidence="2">Belongs to the class-II pyridoxal-phosphate-dependent aminotransferase family. Histidinol-phosphate aminotransferase subfamily.</text>
</comment>
<gene>
    <name type="primary">hisC</name>
    <name type="ordered locus">Z3183</name>
    <name type="ordered locus">ECs2822</name>
</gene>
<organism>
    <name type="scientific">Escherichia coli O157:H7</name>
    <dbReference type="NCBI Taxonomy" id="83334"/>
    <lineage>
        <taxon>Bacteria</taxon>
        <taxon>Pseudomonadati</taxon>
        <taxon>Pseudomonadota</taxon>
        <taxon>Gammaproteobacteria</taxon>
        <taxon>Enterobacterales</taxon>
        <taxon>Enterobacteriaceae</taxon>
        <taxon>Escherichia</taxon>
    </lineage>
</organism>